<gene>
    <name type="primary">nsrR</name>
    <name type="ordered locus">STM4367</name>
</gene>
<protein>
    <recommendedName>
        <fullName>HTH-type transcriptional repressor NsrR</fullName>
    </recommendedName>
</protein>
<dbReference type="EMBL" id="AE006468">
    <property type="protein sequence ID" value="AAL23187.1"/>
    <property type="molecule type" value="Genomic_DNA"/>
</dbReference>
<dbReference type="RefSeq" id="WP_001177632.1">
    <property type="nucleotide sequence ID" value="NC_003197.2"/>
</dbReference>
<dbReference type="SMR" id="Q8ZKA3"/>
<dbReference type="STRING" id="99287.STM4367"/>
<dbReference type="PaxDb" id="99287-STM4367"/>
<dbReference type="DNASU" id="1255893"/>
<dbReference type="KEGG" id="stm:STM4367"/>
<dbReference type="PATRIC" id="fig|99287.12.peg.4591"/>
<dbReference type="HOGENOM" id="CLU_107144_2_1_6"/>
<dbReference type="OMA" id="AQEAFYA"/>
<dbReference type="PhylomeDB" id="Q8ZKA3"/>
<dbReference type="BioCyc" id="SENT99287:STM4367-MONOMER"/>
<dbReference type="Proteomes" id="UP000001014">
    <property type="component" value="Chromosome"/>
</dbReference>
<dbReference type="GO" id="GO:0005829">
    <property type="term" value="C:cytosol"/>
    <property type="evidence" value="ECO:0000318"/>
    <property type="project" value="GO_Central"/>
</dbReference>
<dbReference type="GO" id="GO:0051537">
    <property type="term" value="F:2 iron, 2 sulfur cluster binding"/>
    <property type="evidence" value="ECO:0007669"/>
    <property type="project" value="UniProtKB-KW"/>
</dbReference>
<dbReference type="GO" id="GO:0003700">
    <property type="term" value="F:DNA-binding transcription factor activity"/>
    <property type="evidence" value="ECO:0000318"/>
    <property type="project" value="GO_Central"/>
</dbReference>
<dbReference type="GO" id="GO:0003690">
    <property type="term" value="F:double-stranded DNA binding"/>
    <property type="evidence" value="ECO:0007669"/>
    <property type="project" value="UniProtKB-UniRule"/>
</dbReference>
<dbReference type="GO" id="GO:0005506">
    <property type="term" value="F:iron ion binding"/>
    <property type="evidence" value="ECO:0007669"/>
    <property type="project" value="UniProtKB-UniRule"/>
</dbReference>
<dbReference type="GO" id="GO:0045892">
    <property type="term" value="P:negative regulation of DNA-templated transcription"/>
    <property type="evidence" value="ECO:0007669"/>
    <property type="project" value="InterPro"/>
</dbReference>
<dbReference type="GO" id="GO:0006355">
    <property type="term" value="P:regulation of DNA-templated transcription"/>
    <property type="evidence" value="ECO:0000318"/>
    <property type="project" value="GO_Central"/>
</dbReference>
<dbReference type="FunFam" id="1.10.10.10:FF:000105">
    <property type="entry name" value="HTH-type transcriptional repressor NsrR"/>
    <property type="match status" value="1"/>
</dbReference>
<dbReference type="Gene3D" id="1.10.10.10">
    <property type="entry name" value="Winged helix-like DNA-binding domain superfamily/Winged helix DNA-binding domain"/>
    <property type="match status" value="1"/>
</dbReference>
<dbReference type="HAMAP" id="MF_01177">
    <property type="entry name" value="HTH_type_NsrR"/>
    <property type="match status" value="1"/>
</dbReference>
<dbReference type="InterPro" id="IPR000944">
    <property type="entry name" value="Tscrpt_reg_Rrf2"/>
</dbReference>
<dbReference type="InterPro" id="IPR023761">
    <property type="entry name" value="Tscrpt_rep_HTH_NsrR"/>
</dbReference>
<dbReference type="InterPro" id="IPR036388">
    <property type="entry name" value="WH-like_DNA-bd_sf"/>
</dbReference>
<dbReference type="InterPro" id="IPR036390">
    <property type="entry name" value="WH_DNA-bd_sf"/>
</dbReference>
<dbReference type="NCBIfam" id="NF008240">
    <property type="entry name" value="PRK11014.1"/>
    <property type="match status" value="1"/>
</dbReference>
<dbReference type="NCBIfam" id="TIGR00738">
    <property type="entry name" value="rrf2_super"/>
    <property type="match status" value="1"/>
</dbReference>
<dbReference type="PANTHER" id="PTHR33221:SF4">
    <property type="entry name" value="HTH-TYPE TRANSCRIPTIONAL REPRESSOR NSRR"/>
    <property type="match status" value="1"/>
</dbReference>
<dbReference type="PANTHER" id="PTHR33221">
    <property type="entry name" value="WINGED HELIX-TURN-HELIX TRANSCRIPTIONAL REGULATOR, RRF2 FAMILY"/>
    <property type="match status" value="1"/>
</dbReference>
<dbReference type="Pfam" id="PF02082">
    <property type="entry name" value="Rrf2"/>
    <property type="match status" value="1"/>
</dbReference>
<dbReference type="SUPFAM" id="SSF46785">
    <property type="entry name" value="Winged helix' DNA-binding domain"/>
    <property type="match status" value="1"/>
</dbReference>
<dbReference type="PROSITE" id="PS51197">
    <property type="entry name" value="HTH_RRF2_2"/>
    <property type="match status" value="1"/>
</dbReference>
<organism>
    <name type="scientific">Salmonella typhimurium (strain LT2 / SGSC1412 / ATCC 700720)</name>
    <dbReference type="NCBI Taxonomy" id="99287"/>
    <lineage>
        <taxon>Bacteria</taxon>
        <taxon>Pseudomonadati</taxon>
        <taxon>Pseudomonadota</taxon>
        <taxon>Gammaproteobacteria</taxon>
        <taxon>Enterobacterales</taxon>
        <taxon>Enterobacteriaceae</taxon>
        <taxon>Salmonella</taxon>
    </lineage>
</organism>
<accession>Q8ZKA3</accession>
<keyword id="KW-0001">2Fe-2S</keyword>
<keyword id="KW-0238">DNA-binding</keyword>
<keyword id="KW-0408">Iron</keyword>
<keyword id="KW-0411">Iron-sulfur</keyword>
<keyword id="KW-0479">Metal-binding</keyword>
<keyword id="KW-1185">Reference proteome</keyword>
<keyword id="KW-0678">Repressor</keyword>
<keyword id="KW-0804">Transcription</keyword>
<keyword id="KW-0805">Transcription regulation</keyword>
<evidence type="ECO:0000250" key="1"/>
<evidence type="ECO:0000255" key="2"/>
<evidence type="ECO:0000305" key="3"/>
<sequence>MQLTSFTDYGLRALIYMASLPDGRMTSISEVTEVYGVSRNHMVKIINQLSRAGFVTAVRGKNGGIRLGKPANTICIGDVVRELEPLSLVNCSSEFCHITPACRLKQALSKAVQSFLKELDNYTLADLVEENQPLYKLLLVE</sequence>
<feature type="chain" id="PRO_0000268947" description="HTH-type transcriptional repressor NsrR">
    <location>
        <begin position="1"/>
        <end position="141"/>
    </location>
</feature>
<feature type="domain" description="HTH rrf2-type">
    <location>
        <begin position="2"/>
        <end position="129"/>
    </location>
</feature>
<feature type="DNA-binding region" description="H-T-H motif" evidence="1">
    <location>
        <begin position="28"/>
        <end position="51"/>
    </location>
</feature>
<feature type="binding site" evidence="2">
    <location>
        <position position="91"/>
    </location>
    <ligand>
        <name>[2Fe-2S] cluster</name>
        <dbReference type="ChEBI" id="CHEBI:190135"/>
    </ligand>
</feature>
<feature type="binding site" evidence="2">
    <location>
        <position position="96"/>
    </location>
    <ligand>
        <name>[2Fe-2S] cluster</name>
        <dbReference type="ChEBI" id="CHEBI:190135"/>
    </ligand>
</feature>
<feature type="binding site" evidence="2">
    <location>
        <position position="102"/>
    </location>
    <ligand>
        <name>[2Fe-2S] cluster</name>
        <dbReference type="ChEBI" id="CHEBI:190135"/>
    </ligand>
</feature>
<proteinExistence type="inferred from homology"/>
<reference key="1">
    <citation type="journal article" date="2001" name="Nature">
        <title>Complete genome sequence of Salmonella enterica serovar Typhimurium LT2.</title>
        <authorList>
            <person name="McClelland M."/>
            <person name="Sanderson K.E."/>
            <person name="Spieth J."/>
            <person name="Clifton S.W."/>
            <person name="Latreille P."/>
            <person name="Courtney L."/>
            <person name="Porwollik S."/>
            <person name="Ali J."/>
            <person name="Dante M."/>
            <person name="Du F."/>
            <person name="Hou S."/>
            <person name="Layman D."/>
            <person name="Leonard S."/>
            <person name="Nguyen C."/>
            <person name="Scott K."/>
            <person name="Holmes A."/>
            <person name="Grewal N."/>
            <person name="Mulvaney E."/>
            <person name="Ryan E."/>
            <person name="Sun H."/>
            <person name="Florea L."/>
            <person name="Miller W."/>
            <person name="Stoneking T."/>
            <person name="Nhan M."/>
            <person name="Waterston R."/>
            <person name="Wilson R.K."/>
        </authorList>
    </citation>
    <scope>NUCLEOTIDE SEQUENCE [LARGE SCALE GENOMIC DNA]</scope>
    <source>
        <strain>LT2 / SGSC1412 / ATCC 700720</strain>
    </source>
</reference>
<reference key="2">
    <citation type="journal article" date="2006" name="J. Biol. Chem.">
        <title>Maintenance of nitric oxide and redox homeostasis by the Salmonella flavohemoglobin hmp.</title>
        <authorList>
            <person name="Bang I.-S."/>
            <person name="Liu L."/>
            <person name="Vazquez-Torres A."/>
            <person name="Crouch M.-L."/>
            <person name="Stamler J.S."/>
            <person name="Fang F.C."/>
        </authorList>
    </citation>
    <scope>INVOLVEMENT IN REPRESSION OF FLAVOHEMOGLOBIN HMP</scope>
</reference>
<name>NSRR_SALTY</name>
<comment type="function">
    <text>Nitric oxide-sensitive repressor of genes involved in protecting the cell against nitrosative stress. May require iron for activity. Represses hmp expression under conditions of elevated intracellular iron concentrations, in the absence of nitric oxide.</text>
</comment>
<comment type="cofactor">
    <cofactor evidence="3">
        <name>[2Fe-2S] cluster</name>
        <dbReference type="ChEBI" id="CHEBI:190135"/>
    </cofactor>
    <text evidence="3">Binds 1 [2Fe-2S] cluster per subunit.</text>
</comment>